<proteinExistence type="inferred from homology"/>
<dbReference type="EMBL" id="AE016823">
    <property type="protein sequence ID" value="AAS69373.1"/>
    <property type="molecule type" value="Genomic_DNA"/>
</dbReference>
<dbReference type="RefSeq" id="WP_000091209.1">
    <property type="nucleotide sequence ID" value="NC_005823.1"/>
</dbReference>
<dbReference type="SMR" id="Q72UA5"/>
<dbReference type="GeneID" id="61144096"/>
<dbReference type="KEGG" id="lic:LIC_10756"/>
<dbReference type="HOGENOM" id="CLU_072226_1_1_12"/>
<dbReference type="Proteomes" id="UP000007037">
    <property type="component" value="Chromosome I"/>
</dbReference>
<dbReference type="GO" id="GO:0015935">
    <property type="term" value="C:small ribosomal subunit"/>
    <property type="evidence" value="ECO:0007669"/>
    <property type="project" value="InterPro"/>
</dbReference>
<dbReference type="GO" id="GO:0019843">
    <property type="term" value="F:rRNA binding"/>
    <property type="evidence" value="ECO:0007669"/>
    <property type="project" value="UniProtKB-UniRule"/>
</dbReference>
<dbReference type="GO" id="GO:0003735">
    <property type="term" value="F:structural constituent of ribosome"/>
    <property type="evidence" value="ECO:0007669"/>
    <property type="project" value="InterPro"/>
</dbReference>
<dbReference type="GO" id="GO:0000049">
    <property type="term" value="F:tRNA binding"/>
    <property type="evidence" value="ECO:0007669"/>
    <property type="project" value="UniProtKB-UniRule"/>
</dbReference>
<dbReference type="GO" id="GO:0006412">
    <property type="term" value="P:translation"/>
    <property type="evidence" value="ECO:0007669"/>
    <property type="project" value="UniProtKB-UniRule"/>
</dbReference>
<dbReference type="CDD" id="cd14869">
    <property type="entry name" value="uS7_Bacteria"/>
    <property type="match status" value="1"/>
</dbReference>
<dbReference type="FunFam" id="1.10.455.10:FF:000001">
    <property type="entry name" value="30S ribosomal protein S7"/>
    <property type="match status" value="1"/>
</dbReference>
<dbReference type="Gene3D" id="1.10.455.10">
    <property type="entry name" value="Ribosomal protein S7 domain"/>
    <property type="match status" value="1"/>
</dbReference>
<dbReference type="HAMAP" id="MF_00480_B">
    <property type="entry name" value="Ribosomal_uS7_B"/>
    <property type="match status" value="1"/>
</dbReference>
<dbReference type="InterPro" id="IPR000235">
    <property type="entry name" value="Ribosomal_uS7"/>
</dbReference>
<dbReference type="InterPro" id="IPR005717">
    <property type="entry name" value="Ribosomal_uS7_bac/org-type"/>
</dbReference>
<dbReference type="InterPro" id="IPR023798">
    <property type="entry name" value="Ribosomal_uS7_dom"/>
</dbReference>
<dbReference type="InterPro" id="IPR036823">
    <property type="entry name" value="Ribosomal_uS7_dom_sf"/>
</dbReference>
<dbReference type="NCBIfam" id="TIGR01029">
    <property type="entry name" value="rpsG_bact"/>
    <property type="match status" value="1"/>
</dbReference>
<dbReference type="PANTHER" id="PTHR11205">
    <property type="entry name" value="RIBOSOMAL PROTEIN S7"/>
    <property type="match status" value="1"/>
</dbReference>
<dbReference type="Pfam" id="PF00177">
    <property type="entry name" value="Ribosomal_S7"/>
    <property type="match status" value="1"/>
</dbReference>
<dbReference type="PIRSF" id="PIRSF002122">
    <property type="entry name" value="RPS7p_RPS7a_RPS5e_RPS7o"/>
    <property type="match status" value="1"/>
</dbReference>
<dbReference type="SUPFAM" id="SSF47973">
    <property type="entry name" value="Ribosomal protein S7"/>
    <property type="match status" value="1"/>
</dbReference>
<name>RS7_LEPIC</name>
<gene>
    <name evidence="1" type="primary">rpsG</name>
    <name type="ordered locus">LIC_10756</name>
</gene>
<keyword id="KW-0687">Ribonucleoprotein</keyword>
<keyword id="KW-0689">Ribosomal protein</keyword>
<keyword id="KW-0694">RNA-binding</keyword>
<keyword id="KW-0699">rRNA-binding</keyword>
<keyword id="KW-0820">tRNA-binding</keyword>
<accession>Q72UA5</accession>
<evidence type="ECO:0000255" key="1">
    <source>
        <dbReference type="HAMAP-Rule" id="MF_00480"/>
    </source>
</evidence>
<evidence type="ECO:0000305" key="2"/>
<feature type="chain" id="PRO_0000124284" description="Small ribosomal subunit protein uS7">
    <location>
        <begin position="1"/>
        <end position="157"/>
    </location>
</feature>
<sequence length="157" mass="18073">MSRRRGKVEPRKITPDPVYNDVQVAKFINCLMLSGKKSVAEQLFYDALEIIQKKTGNDPYTTFREALENAKPQVEVKSRRVGGVTYQVPVEVRPERRLALGIRWLIRYSRDRNEKGMAAKLAAEFIEAQKGTGSAIKKKEDIRKMAEANKAFSHYRW</sequence>
<comment type="function">
    <text evidence="1">One of the primary rRNA binding proteins, it binds directly to 16S rRNA where it nucleates assembly of the head domain of the 30S subunit. Is located at the subunit interface close to the decoding center, probably blocks exit of the E-site tRNA.</text>
</comment>
<comment type="subunit">
    <text evidence="1">Part of the 30S ribosomal subunit. Contacts proteins S9 and S11.</text>
</comment>
<comment type="similarity">
    <text evidence="1">Belongs to the universal ribosomal protein uS7 family.</text>
</comment>
<protein>
    <recommendedName>
        <fullName evidence="1">Small ribosomal subunit protein uS7</fullName>
    </recommendedName>
    <alternativeName>
        <fullName evidence="2">30S ribosomal protein S7</fullName>
    </alternativeName>
</protein>
<organism>
    <name type="scientific">Leptospira interrogans serogroup Icterohaemorrhagiae serovar copenhageni (strain Fiocruz L1-130)</name>
    <dbReference type="NCBI Taxonomy" id="267671"/>
    <lineage>
        <taxon>Bacteria</taxon>
        <taxon>Pseudomonadati</taxon>
        <taxon>Spirochaetota</taxon>
        <taxon>Spirochaetia</taxon>
        <taxon>Leptospirales</taxon>
        <taxon>Leptospiraceae</taxon>
        <taxon>Leptospira</taxon>
    </lineage>
</organism>
<reference key="1">
    <citation type="journal article" date="2004" name="J. Bacteriol.">
        <title>Comparative genomics of two Leptospira interrogans serovars reveals novel insights into physiology and pathogenesis.</title>
        <authorList>
            <person name="Nascimento A.L.T.O."/>
            <person name="Ko A.I."/>
            <person name="Martins E.A.L."/>
            <person name="Monteiro-Vitorello C.B."/>
            <person name="Ho P.L."/>
            <person name="Haake D.A."/>
            <person name="Verjovski-Almeida S."/>
            <person name="Hartskeerl R.A."/>
            <person name="Marques M.V."/>
            <person name="Oliveira M.C."/>
            <person name="Menck C.F.M."/>
            <person name="Leite L.C.C."/>
            <person name="Carrer H."/>
            <person name="Coutinho L.L."/>
            <person name="Degrave W.M."/>
            <person name="Dellagostin O.A."/>
            <person name="El-Dorry H."/>
            <person name="Ferro E.S."/>
            <person name="Ferro M.I.T."/>
            <person name="Furlan L.R."/>
            <person name="Gamberini M."/>
            <person name="Giglioti E.A."/>
            <person name="Goes-Neto A."/>
            <person name="Goldman G.H."/>
            <person name="Goldman M.H.S."/>
            <person name="Harakava R."/>
            <person name="Jeronimo S.M.B."/>
            <person name="Junqueira-de-Azevedo I.L.M."/>
            <person name="Kimura E.T."/>
            <person name="Kuramae E.E."/>
            <person name="Lemos E.G.M."/>
            <person name="Lemos M.V.F."/>
            <person name="Marino C.L."/>
            <person name="Nunes L.R."/>
            <person name="de Oliveira R.C."/>
            <person name="Pereira G.G."/>
            <person name="Reis M.S."/>
            <person name="Schriefer A."/>
            <person name="Siqueira W.J."/>
            <person name="Sommer P."/>
            <person name="Tsai S.M."/>
            <person name="Simpson A.J.G."/>
            <person name="Ferro J.A."/>
            <person name="Camargo L.E.A."/>
            <person name="Kitajima J.P."/>
            <person name="Setubal J.C."/>
            <person name="Van Sluys M.A."/>
        </authorList>
    </citation>
    <scope>NUCLEOTIDE SEQUENCE [LARGE SCALE GENOMIC DNA]</scope>
    <source>
        <strain>Fiocruz L1-130</strain>
    </source>
</reference>